<proteinExistence type="inferred from homology"/>
<name>RS20_CHESB</name>
<dbReference type="EMBL" id="CP000390">
    <property type="protein sequence ID" value="ABG65469.1"/>
    <property type="molecule type" value="Genomic_DNA"/>
</dbReference>
<dbReference type="SMR" id="Q11AV6"/>
<dbReference type="STRING" id="266779.Meso_4102"/>
<dbReference type="KEGG" id="mes:Meso_4102"/>
<dbReference type="eggNOG" id="COG0268">
    <property type="taxonomic scope" value="Bacteria"/>
</dbReference>
<dbReference type="HOGENOM" id="CLU_160655_3_0_5"/>
<dbReference type="OrthoDB" id="9807974at2"/>
<dbReference type="GO" id="GO:0005829">
    <property type="term" value="C:cytosol"/>
    <property type="evidence" value="ECO:0007669"/>
    <property type="project" value="TreeGrafter"/>
</dbReference>
<dbReference type="GO" id="GO:0015935">
    <property type="term" value="C:small ribosomal subunit"/>
    <property type="evidence" value="ECO:0007669"/>
    <property type="project" value="TreeGrafter"/>
</dbReference>
<dbReference type="GO" id="GO:0070181">
    <property type="term" value="F:small ribosomal subunit rRNA binding"/>
    <property type="evidence" value="ECO:0007669"/>
    <property type="project" value="TreeGrafter"/>
</dbReference>
<dbReference type="GO" id="GO:0003735">
    <property type="term" value="F:structural constituent of ribosome"/>
    <property type="evidence" value="ECO:0007669"/>
    <property type="project" value="InterPro"/>
</dbReference>
<dbReference type="GO" id="GO:0006412">
    <property type="term" value="P:translation"/>
    <property type="evidence" value="ECO:0007669"/>
    <property type="project" value="UniProtKB-UniRule"/>
</dbReference>
<dbReference type="FunFam" id="1.20.58.110:FF:000001">
    <property type="entry name" value="30S ribosomal protein S20"/>
    <property type="match status" value="1"/>
</dbReference>
<dbReference type="Gene3D" id="1.20.58.110">
    <property type="entry name" value="Ribosomal protein S20"/>
    <property type="match status" value="1"/>
</dbReference>
<dbReference type="HAMAP" id="MF_00500">
    <property type="entry name" value="Ribosomal_bS20"/>
    <property type="match status" value="1"/>
</dbReference>
<dbReference type="InterPro" id="IPR002583">
    <property type="entry name" value="Ribosomal_bS20"/>
</dbReference>
<dbReference type="InterPro" id="IPR036510">
    <property type="entry name" value="Ribosomal_bS20_sf"/>
</dbReference>
<dbReference type="NCBIfam" id="TIGR00029">
    <property type="entry name" value="S20"/>
    <property type="match status" value="1"/>
</dbReference>
<dbReference type="PANTHER" id="PTHR33398">
    <property type="entry name" value="30S RIBOSOMAL PROTEIN S20"/>
    <property type="match status" value="1"/>
</dbReference>
<dbReference type="PANTHER" id="PTHR33398:SF1">
    <property type="entry name" value="SMALL RIBOSOMAL SUBUNIT PROTEIN BS20C"/>
    <property type="match status" value="1"/>
</dbReference>
<dbReference type="Pfam" id="PF01649">
    <property type="entry name" value="Ribosomal_S20p"/>
    <property type="match status" value="1"/>
</dbReference>
<dbReference type="SUPFAM" id="SSF46992">
    <property type="entry name" value="Ribosomal protein S20"/>
    <property type="match status" value="1"/>
</dbReference>
<accession>Q11AV6</accession>
<sequence length="88" mass="9640">MANTTSAKKAVRKIARRTAINKTRRSRVRTYVRKVEEAIASGDKGAAEAALKAAQPELMRAATRGVLHKNTAARKVSRLARRVKTLNA</sequence>
<reference key="1">
    <citation type="submission" date="2006-06" db="EMBL/GenBank/DDBJ databases">
        <title>Complete sequence of chromosome of Mesorhizobium sp. BNC1.</title>
        <authorList>
            <consortium name="US DOE Joint Genome Institute"/>
            <person name="Copeland A."/>
            <person name="Lucas S."/>
            <person name="Lapidus A."/>
            <person name="Barry K."/>
            <person name="Detter J.C."/>
            <person name="Glavina del Rio T."/>
            <person name="Hammon N."/>
            <person name="Israni S."/>
            <person name="Dalin E."/>
            <person name="Tice H."/>
            <person name="Pitluck S."/>
            <person name="Chertkov O."/>
            <person name="Brettin T."/>
            <person name="Bruce D."/>
            <person name="Han C."/>
            <person name="Tapia R."/>
            <person name="Gilna P."/>
            <person name="Schmutz J."/>
            <person name="Larimer F."/>
            <person name="Land M."/>
            <person name="Hauser L."/>
            <person name="Kyrpides N."/>
            <person name="Mikhailova N."/>
            <person name="Richardson P."/>
        </authorList>
    </citation>
    <scope>NUCLEOTIDE SEQUENCE [LARGE SCALE GENOMIC DNA]</scope>
    <source>
        <strain>BNC1</strain>
    </source>
</reference>
<evidence type="ECO:0000255" key="1">
    <source>
        <dbReference type="HAMAP-Rule" id="MF_00500"/>
    </source>
</evidence>
<evidence type="ECO:0000305" key="2"/>
<comment type="function">
    <text evidence="1">Binds directly to 16S ribosomal RNA.</text>
</comment>
<comment type="similarity">
    <text evidence="1">Belongs to the bacterial ribosomal protein bS20 family.</text>
</comment>
<organism>
    <name type="scientific">Chelativorans sp. (strain BNC1)</name>
    <dbReference type="NCBI Taxonomy" id="266779"/>
    <lineage>
        <taxon>Bacteria</taxon>
        <taxon>Pseudomonadati</taxon>
        <taxon>Pseudomonadota</taxon>
        <taxon>Alphaproteobacteria</taxon>
        <taxon>Hyphomicrobiales</taxon>
        <taxon>Phyllobacteriaceae</taxon>
        <taxon>Chelativorans</taxon>
    </lineage>
</organism>
<feature type="chain" id="PRO_0000260124" description="Small ribosomal subunit protein bS20">
    <location>
        <begin position="1"/>
        <end position="88"/>
    </location>
</feature>
<gene>
    <name evidence="1" type="primary">rpsT</name>
    <name type="ordered locus">Meso_4102</name>
</gene>
<protein>
    <recommendedName>
        <fullName evidence="1">Small ribosomal subunit protein bS20</fullName>
    </recommendedName>
    <alternativeName>
        <fullName evidence="2">30S ribosomal protein S20</fullName>
    </alternativeName>
</protein>
<keyword id="KW-0687">Ribonucleoprotein</keyword>
<keyword id="KW-0689">Ribosomal protein</keyword>
<keyword id="KW-0694">RNA-binding</keyword>
<keyword id="KW-0699">rRNA-binding</keyword>